<sequence>MRNYDLSPLLRQWIGFDKLASTMQGGQEPQGFPPYNIEKTDDNHYRISLALAGFKQSELDIEVEGPRLTVRGKPTPVEKQVEYLHQGLVRKEFSLTFTLAEHLNVDNAQFENGLLHIDLLRQVPEALQPQRIAIGSATPQERQVLESPEAPDQQ</sequence>
<dbReference type="EMBL" id="CP000720">
    <property type="protein sequence ID" value="ABS47853.1"/>
    <property type="molecule type" value="Genomic_DNA"/>
</dbReference>
<dbReference type="RefSeq" id="WP_002209635.1">
    <property type="nucleotide sequence ID" value="NC_009708.1"/>
</dbReference>
<dbReference type="SMR" id="A7FPA7"/>
<dbReference type="GeneID" id="57974634"/>
<dbReference type="KEGG" id="ypi:YpsIP31758_4142"/>
<dbReference type="HOGENOM" id="CLU_046737_4_2_6"/>
<dbReference type="Proteomes" id="UP000002412">
    <property type="component" value="Chromosome"/>
</dbReference>
<dbReference type="GO" id="GO:0005737">
    <property type="term" value="C:cytoplasm"/>
    <property type="evidence" value="ECO:0007669"/>
    <property type="project" value="UniProtKB-SubCell"/>
</dbReference>
<dbReference type="GO" id="GO:0050821">
    <property type="term" value="P:protein stabilization"/>
    <property type="evidence" value="ECO:0007669"/>
    <property type="project" value="UniProtKB-UniRule"/>
</dbReference>
<dbReference type="CDD" id="cd06470">
    <property type="entry name" value="ACD_IbpA-B_like"/>
    <property type="match status" value="1"/>
</dbReference>
<dbReference type="Gene3D" id="2.60.40.790">
    <property type="match status" value="1"/>
</dbReference>
<dbReference type="HAMAP" id="MF_02001">
    <property type="entry name" value="HSP20_IbpB"/>
    <property type="match status" value="1"/>
</dbReference>
<dbReference type="InterPro" id="IPR002068">
    <property type="entry name" value="A-crystallin/Hsp20_dom"/>
</dbReference>
<dbReference type="InterPro" id="IPR037913">
    <property type="entry name" value="ACD_IbpA/B"/>
</dbReference>
<dbReference type="InterPro" id="IPR008978">
    <property type="entry name" value="HSP20-like_chaperone"/>
</dbReference>
<dbReference type="InterPro" id="IPR022848">
    <property type="entry name" value="HSP20_IbpB"/>
</dbReference>
<dbReference type="NCBIfam" id="NF008618">
    <property type="entry name" value="PRK11597.1"/>
    <property type="match status" value="1"/>
</dbReference>
<dbReference type="PANTHER" id="PTHR47062">
    <property type="match status" value="1"/>
</dbReference>
<dbReference type="PANTHER" id="PTHR47062:SF2">
    <property type="entry name" value="SMALL HEAT SHOCK PROTEIN IBPB"/>
    <property type="match status" value="1"/>
</dbReference>
<dbReference type="Pfam" id="PF00011">
    <property type="entry name" value="HSP20"/>
    <property type="match status" value="1"/>
</dbReference>
<dbReference type="SUPFAM" id="SSF49764">
    <property type="entry name" value="HSP20-like chaperones"/>
    <property type="match status" value="1"/>
</dbReference>
<dbReference type="PROSITE" id="PS01031">
    <property type="entry name" value="SHSP"/>
    <property type="match status" value="1"/>
</dbReference>
<feature type="chain" id="PRO_1000070883" description="Small heat shock protein IbpB">
    <location>
        <begin position="1"/>
        <end position="154"/>
    </location>
</feature>
<feature type="domain" description="sHSP" evidence="2">
    <location>
        <begin position="26"/>
        <end position="137"/>
    </location>
</feature>
<protein>
    <recommendedName>
        <fullName evidence="1">Small heat shock protein IbpB</fullName>
    </recommendedName>
    <alternativeName>
        <fullName evidence="1">16 kDa heat shock protein B</fullName>
    </alternativeName>
</protein>
<comment type="function">
    <text evidence="1">Associates with aggregated proteins, together with IbpA, to stabilize and protect them from irreversible denaturation and extensive proteolysis during heat shock and oxidative stress. Aggregated proteins bound to the IbpAB complex are more efficiently refolded and reactivated by the ATP-dependent chaperone systems ClpB and DnaK/DnaJ/GrpE. Its activity is ATP-independent.</text>
</comment>
<comment type="subunit">
    <text evidence="1">Homodimer. Forms homomultimers of about 100-150 subunits at optimal growth temperatures. Conformation changes to oligomers at high temperatures or high ionic concentrations. The decrease in size of the multimers is accompanied by an increase in chaperone activity.</text>
</comment>
<comment type="subcellular location">
    <subcellularLocation>
        <location evidence="1">Cytoplasm</location>
    </subcellularLocation>
</comment>
<comment type="domain">
    <text evidence="1">The N- and C-terminal flexible termini are involved in oligomerization and in the binding of non-native substrate proteins, and are essential for chaperone activity.</text>
</comment>
<comment type="similarity">
    <text evidence="1 2">Belongs to the small heat shock protein (HSP20) family.</text>
</comment>
<gene>
    <name evidence="1" type="primary">ibpB</name>
    <name type="ordered locus">YpsIP31758_4142</name>
</gene>
<evidence type="ECO:0000255" key="1">
    <source>
        <dbReference type="HAMAP-Rule" id="MF_02001"/>
    </source>
</evidence>
<evidence type="ECO:0000255" key="2">
    <source>
        <dbReference type="PROSITE-ProRule" id="PRU00285"/>
    </source>
</evidence>
<keyword id="KW-0143">Chaperone</keyword>
<keyword id="KW-0963">Cytoplasm</keyword>
<keyword id="KW-0346">Stress response</keyword>
<name>IBPB_YERP3</name>
<organism>
    <name type="scientific">Yersinia pseudotuberculosis serotype O:1b (strain IP 31758)</name>
    <dbReference type="NCBI Taxonomy" id="349747"/>
    <lineage>
        <taxon>Bacteria</taxon>
        <taxon>Pseudomonadati</taxon>
        <taxon>Pseudomonadota</taxon>
        <taxon>Gammaproteobacteria</taxon>
        <taxon>Enterobacterales</taxon>
        <taxon>Yersiniaceae</taxon>
        <taxon>Yersinia</taxon>
    </lineage>
</organism>
<reference key="1">
    <citation type="journal article" date="2007" name="PLoS Genet.">
        <title>The complete genome sequence of Yersinia pseudotuberculosis IP31758, the causative agent of Far East scarlet-like fever.</title>
        <authorList>
            <person name="Eppinger M."/>
            <person name="Rosovitz M.J."/>
            <person name="Fricke W.F."/>
            <person name="Rasko D.A."/>
            <person name="Kokorina G."/>
            <person name="Fayolle C."/>
            <person name="Lindler L.E."/>
            <person name="Carniel E."/>
            <person name="Ravel J."/>
        </authorList>
    </citation>
    <scope>NUCLEOTIDE SEQUENCE [LARGE SCALE GENOMIC DNA]</scope>
    <source>
        <strain>IP 31758</strain>
    </source>
</reference>
<proteinExistence type="inferred from homology"/>
<accession>A7FPA7</accession>